<gene>
    <name evidence="1" type="primary">proS</name>
    <name type="ordered locus">NIS_1023</name>
</gene>
<proteinExistence type="inferred from homology"/>
<name>SYP_NITSB</name>
<accession>A6Q3S4</accession>
<sequence>MRFSKTFIPTMKENPKDAVLPSHIYLVRGGFITQVASGIYNFLPIGKKVLDKIRAIVKEELDKAGCQEVSLGFVTPCELWEESGRLGKYGKELLRFKDRKENCFVLGPTHEEMMVDLVRNRVTSYKQLPLNLYQINWKFRDEARPRFGLLRGREFLMKDGYSFHADEEDMRREYDLMEKTYRNIFGRLGLRFRAVEADVGAIGGNASKEFMVLAESGEDTIAICTECEYAANVEAAKRKKTKAPAEAPEFSNFEPFYTPNLSSIDELSDFFKVHPYYFVKAVAKKALYDEGEEIVLFFLRGSDELQEVKASNAIGANEMVDVSEEELEKSGIVPGFIAPYEQKCKIVLDEDLKGAKGLICGGNKKDYHLIGADLSQFDDALFVDIAQVKEGDLCPKCGAVMKLTKGIEVGHIFQLGTRYSAAMNATFLDKDGKAKPFVMGTYGIGVSRLVAASIEQNHDERGCIWPLQIAPFEVDIIVSNIKDEEQIAFGEELYEQLKNAGVDVILDDRPERFGPKIKDFELIGFPYGIIVGKGLKEGTVQIVQRETLDKVEIPKEDVFKTILEKVQAS</sequence>
<feature type="chain" id="PRO_1000069150" description="Proline--tRNA ligase">
    <location>
        <begin position="1"/>
        <end position="569"/>
    </location>
</feature>
<dbReference type="EC" id="6.1.1.15" evidence="1"/>
<dbReference type="EMBL" id="AP009178">
    <property type="protein sequence ID" value="BAF70133.1"/>
    <property type="molecule type" value="Genomic_DNA"/>
</dbReference>
<dbReference type="RefSeq" id="WP_012082396.1">
    <property type="nucleotide sequence ID" value="NC_009662.1"/>
</dbReference>
<dbReference type="SMR" id="A6Q3S4"/>
<dbReference type="FunCoup" id="A6Q3S4">
    <property type="interactions" value="448"/>
</dbReference>
<dbReference type="STRING" id="387092.NIS_1023"/>
<dbReference type="KEGG" id="nis:NIS_1023"/>
<dbReference type="eggNOG" id="COG0442">
    <property type="taxonomic scope" value="Bacteria"/>
</dbReference>
<dbReference type="HOGENOM" id="CLU_016739_0_0_7"/>
<dbReference type="InParanoid" id="A6Q3S4"/>
<dbReference type="OrthoDB" id="9809052at2"/>
<dbReference type="Proteomes" id="UP000001118">
    <property type="component" value="Chromosome"/>
</dbReference>
<dbReference type="GO" id="GO:0005829">
    <property type="term" value="C:cytosol"/>
    <property type="evidence" value="ECO:0007669"/>
    <property type="project" value="TreeGrafter"/>
</dbReference>
<dbReference type="GO" id="GO:0002161">
    <property type="term" value="F:aminoacyl-tRNA deacylase activity"/>
    <property type="evidence" value="ECO:0007669"/>
    <property type="project" value="InterPro"/>
</dbReference>
<dbReference type="GO" id="GO:0005524">
    <property type="term" value="F:ATP binding"/>
    <property type="evidence" value="ECO:0007669"/>
    <property type="project" value="UniProtKB-UniRule"/>
</dbReference>
<dbReference type="GO" id="GO:0004827">
    <property type="term" value="F:proline-tRNA ligase activity"/>
    <property type="evidence" value="ECO:0007669"/>
    <property type="project" value="UniProtKB-UniRule"/>
</dbReference>
<dbReference type="GO" id="GO:0006433">
    <property type="term" value="P:prolyl-tRNA aminoacylation"/>
    <property type="evidence" value="ECO:0007669"/>
    <property type="project" value="UniProtKB-UniRule"/>
</dbReference>
<dbReference type="CDD" id="cd04334">
    <property type="entry name" value="ProRS-INS"/>
    <property type="match status" value="1"/>
</dbReference>
<dbReference type="CDD" id="cd00861">
    <property type="entry name" value="ProRS_anticodon_short"/>
    <property type="match status" value="1"/>
</dbReference>
<dbReference type="CDD" id="cd00779">
    <property type="entry name" value="ProRS_core_prok"/>
    <property type="match status" value="1"/>
</dbReference>
<dbReference type="FunFam" id="3.30.930.10:FF:000065">
    <property type="entry name" value="Proline--tRNA ligase"/>
    <property type="match status" value="1"/>
</dbReference>
<dbReference type="FunFam" id="3.30.930.10:FF:000066">
    <property type="entry name" value="Proline--tRNA ligase"/>
    <property type="match status" value="1"/>
</dbReference>
<dbReference type="Gene3D" id="3.40.50.800">
    <property type="entry name" value="Anticodon-binding domain"/>
    <property type="match status" value="1"/>
</dbReference>
<dbReference type="Gene3D" id="3.30.930.10">
    <property type="entry name" value="Bira Bifunctional Protein, Domain 2"/>
    <property type="match status" value="2"/>
</dbReference>
<dbReference type="HAMAP" id="MF_01569">
    <property type="entry name" value="Pro_tRNA_synth_type1"/>
    <property type="match status" value="1"/>
</dbReference>
<dbReference type="InterPro" id="IPR002314">
    <property type="entry name" value="aa-tRNA-synt_IIb"/>
</dbReference>
<dbReference type="InterPro" id="IPR006195">
    <property type="entry name" value="aa-tRNA-synth_II"/>
</dbReference>
<dbReference type="InterPro" id="IPR045864">
    <property type="entry name" value="aa-tRNA-synth_II/BPL/LPL"/>
</dbReference>
<dbReference type="InterPro" id="IPR004154">
    <property type="entry name" value="Anticodon-bd"/>
</dbReference>
<dbReference type="InterPro" id="IPR036621">
    <property type="entry name" value="Anticodon-bd_dom_sf"/>
</dbReference>
<dbReference type="InterPro" id="IPR002316">
    <property type="entry name" value="Pro-tRNA-ligase_IIa"/>
</dbReference>
<dbReference type="InterPro" id="IPR004500">
    <property type="entry name" value="Pro-tRNA-synth_IIa_bac-type"/>
</dbReference>
<dbReference type="InterPro" id="IPR023717">
    <property type="entry name" value="Pro-tRNA-Synthase_IIa_type1"/>
</dbReference>
<dbReference type="InterPro" id="IPR050062">
    <property type="entry name" value="Pro-tRNA_synthetase"/>
</dbReference>
<dbReference type="InterPro" id="IPR044140">
    <property type="entry name" value="ProRS_anticodon_short"/>
</dbReference>
<dbReference type="InterPro" id="IPR033730">
    <property type="entry name" value="ProRS_core_prok"/>
</dbReference>
<dbReference type="InterPro" id="IPR036754">
    <property type="entry name" value="YbaK/aa-tRNA-synt-asso_dom_sf"/>
</dbReference>
<dbReference type="InterPro" id="IPR007214">
    <property type="entry name" value="YbaK/aa-tRNA-synth-assoc-dom"/>
</dbReference>
<dbReference type="NCBIfam" id="NF006625">
    <property type="entry name" value="PRK09194.1"/>
    <property type="match status" value="1"/>
</dbReference>
<dbReference type="NCBIfam" id="TIGR00409">
    <property type="entry name" value="proS_fam_II"/>
    <property type="match status" value="1"/>
</dbReference>
<dbReference type="PANTHER" id="PTHR42753">
    <property type="entry name" value="MITOCHONDRIAL RIBOSOME PROTEIN L39/PROLYL-TRNA LIGASE FAMILY MEMBER"/>
    <property type="match status" value="1"/>
</dbReference>
<dbReference type="PANTHER" id="PTHR42753:SF2">
    <property type="entry name" value="PROLINE--TRNA LIGASE"/>
    <property type="match status" value="1"/>
</dbReference>
<dbReference type="Pfam" id="PF03129">
    <property type="entry name" value="HGTP_anticodon"/>
    <property type="match status" value="1"/>
</dbReference>
<dbReference type="Pfam" id="PF00587">
    <property type="entry name" value="tRNA-synt_2b"/>
    <property type="match status" value="1"/>
</dbReference>
<dbReference type="Pfam" id="PF04073">
    <property type="entry name" value="tRNA_edit"/>
    <property type="match status" value="1"/>
</dbReference>
<dbReference type="PRINTS" id="PR01046">
    <property type="entry name" value="TRNASYNTHPRO"/>
</dbReference>
<dbReference type="SUPFAM" id="SSF52954">
    <property type="entry name" value="Class II aaRS ABD-related"/>
    <property type="match status" value="1"/>
</dbReference>
<dbReference type="SUPFAM" id="SSF55681">
    <property type="entry name" value="Class II aaRS and biotin synthetases"/>
    <property type="match status" value="1"/>
</dbReference>
<dbReference type="SUPFAM" id="SSF55826">
    <property type="entry name" value="YbaK/ProRS associated domain"/>
    <property type="match status" value="1"/>
</dbReference>
<dbReference type="PROSITE" id="PS50862">
    <property type="entry name" value="AA_TRNA_LIGASE_II"/>
    <property type="match status" value="1"/>
</dbReference>
<evidence type="ECO:0000255" key="1">
    <source>
        <dbReference type="HAMAP-Rule" id="MF_01569"/>
    </source>
</evidence>
<protein>
    <recommendedName>
        <fullName evidence="1">Proline--tRNA ligase</fullName>
        <ecNumber evidence="1">6.1.1.15</ecNumber>
    </recommendedName>
    <alternativeName>
        <fullName evidence="1">Prolyl-tRNA synthetase</fullName>
        <shortName evidence="1">ProRS</shortName>
    </alternativeName>
</protein>
<comment type="function">
    <text evidence="1">Catalyzes the attachment of proline to tRNA(Pro) in a two-step reaction: proline is first activated by ATP to form Pro-AMP and then transferred to the acceptor end of tRNA(Pro). As ProRS can inadvertently accommodate and process non-cognate amino acids such as alanine and cysteine, to avoid such errors it has two additional distinct editing activities against alanine. One activity is designated as 'pretransfer' editing and involves the tRNA(Pro)-independent hydrolysis of activated Ala-AMP. The other activity is designated 'posttransfer' editing and involves deacylation of mischarged Ala-tRNA(Pro). The misacylated Cys-tRNA(Pro) is not edited by ProRS.</text>
</comment>
<comment type="catalytic activity">
    <reaction evidence="1">
        <text>tRNA(Pro) + L-proline + ATP = L-prolyl-tRNA(Pro) + AMP + diphosphate</text>
        <dbReference type="Rhea" id="RHEA:14305"/>
        <dbReference type="Rhea" id="RHEA-COMP:9700"/>
        <dbReference type="Rhea" id="RHEA-COMP:9702"/>
        <dbReference type="ChEBI" id="CHEBI:30616"/>
        <dbReference type="ChEBI" id="CHEBI:33019"/>
        <dbReference type="ChEBI" id="CHEBI:60039"/>
        <dbReference type="ChEBI" id="CHEBI:78442"/>
        <dbReference type="ChEBI" id="CHEBI:78532"/>
        <dbReference type="ChEBI" id="CHEBI:456215"/>
        <dbReference type="EC" id="6.1.1.15"/>
    </reaction>
</comment>
<comment type="subunit">
    <text evidence="1">Homodimer.</text>
</comment>
<comment type="subcellular location">
    <subcellularLocation>
        <location evidence="1">Cytoplasm</location>
    </subcellularLocation>
</comment>
<comment type="domain">
    <text evidence="1">Consists of three domains: the N-terminal catalytic domain, the editing domain and the C-terminal anticodon-binding domain.</text>
</comment>
<comment type="similarity">
    <text evidence="1">Belongs to the class-II aminoacyl-tRNA synthetase family. ProS type 1 subfamily.</text>
</comment>
<reference key="1">
    <citation type="journal article" date="2007" name="Proc. Natl. Acad. Sci. U.S.A.">
        <title>Deep-sea vent epsilon-proteobacterial genomes provide insights into emergence of pathogens.</title>
        <authorList>
            <person name="Nakagawa S."/>
            <person name="Takaki Y."/>
            <person name="Shimamura S."/>
            <person name="Reysenbach A.-L."/>
            <person name="Takai K."/>
            <person name="Horikoshi K."/>
        </authorList>
    </citation>
    <scope>NUCLEOTIDE SEQUENCE [LARGE SCALE GENOMIC DNA]</scope>
    <source>
        <strain>SB155-2</strain>
    </source>
</reference>
<organism>
    <name type="scientific">Nitratiruptor sp. (strain SB155-2)</name>
    <dbReference type="NCBI Taxonomy" id="387092"/>
    <lineage>
        <taxon>Bacteria</taxon>
        <taxon>Pseudomonadati</taxon>
        <taxon>Campylobacterota</taxon>
        <taxon>Epsilonproteobacteria</taxon>
        <taxon>Nautiliales</taxon>
        <taxon>Nitratiruptoraceae</taxon>
        <taxon>Nitratiruptor</taxon>
    </lineage>
</organism>
<keyword id="KW-0030">Aminoacyl-tRNA synthetase</keyword>
<keyword id="KW-0067">ATP-binding</keyword>
<keyword id="KW-0963">Cytoplasm</keyword>
<keyword id="KW-0436">Ligase</keyword>
<keyword id="KW-0547">Nucleotide-binding</keyword>
<keyword id="KW-0648">Protein biosynthesis</keyword>
<keyword id="KW-1185">Reference proteome</keyword>